<sequence>MLKSNLKIDNSFSVMGVVSRLPKRLKSPSGIEHCKFLLEHRSDQIESGFTRQAWLKMPVQISGNQLIEKTQSITVGSKILVVGFITSHKTQSGLCQLVLHAEQIEFID</sequence>
<organism>
    <name type="scientific">Haemophilus influenzae (strain ATCC 51907 / DSM 11121 / KW20 / Rd)</name>
    <dbReference type="NCBI Taxonomy" id="71421"/>
    <lineage>
        <taxon>Bacteria</taxon>
        <taxon>Pseudomonadati</taxon>
        <taxon>Pseudomonadota</taxon>
        <taxon>Gammaproteobacteria</taxon>
        <taxon>Pasteurellales</taxon>
        <taxon>Pasteurellaceae</taxon>
        <taxon>Haemophilus</taxon>
    </lineage>
</organism>
<evidence type="ECO:0000255" key="1">
    <source>
        <dbReference type="HAMAP-Rule" id="MF_00720"/>
    </source>
</evidence>
<evidence type="ECO:0000305" key="2"/>
<accession>P44748</accession>
<comment type="function">
    <text evidence="1">Involved in the restart of stalled replication forks, which reloads the replicative helicase on sites other than the origin of replication; the PriA-PriB pathway is the major replication restart pathway. During primosome assembly it facilitates complex formation between PriA and DnaT on DNA; stabilizes PriA on DNA. Stimulates the DNA unwinding activity of PriA helicase.</text>
</comment>
<comment type="subunit">
    <text evidence="1">Homodimer. Interacts with PriA and DnaT. Component of the replication restart primosome. Primosome assembly occurs via a 'hand-off' mechanism. PriA binds to replication forks, subsequently PriB then DnaT bind; DnaT then displaces ssDNA to generate the helicase loading substrate.</text>
</comment>
<comment type="similarity">
    <text evidence="1">Belongs to the PriB family.</text>
</comment>
<comment type="sequence caution" evidence="2">
    <conflict type="erroneous initiation">
        <sequence resource="EMBL-CDS" id="AAC22204"/>
    </conflict>
    <text>Truncated N-terminus.</text>
</comment>
<dbReference type="EMBL" id="L42023">
    <property type="protein sequence ID" value="AAC22204.1"/>
    <property type="status" value="ALT_INIT"/>
    <property type="molecule type" value="Genomic_DNA"/>
</dbReference>
<dbReference type="RefSeq" id="NP_438704.2">
    <property type="nucleotide sequence ID" value="NC_000907.1"/>
</dbReference>
<dbReference type="SMR" id="P44748"/>
<dbReference type="STRING" id="71421.HI_0546"/>
<dbReference type="EnsemblBacteria" id="AAC22204">
    <property type="protein sequence ID" value="AAC22204"/>
    <property type="gene ID" value="HI_0546"/>
</dbReference>
<dbReference type="KEGG" id="hin:HI_0546"/>
<dbReference type="PATRIC" id="fig|71421.8.peg.565"/>
<dbReference type="eggNOG" id="COG2965">
    <property type="taxonomic scope" value="Bacteria"/>
</dbReference>
<dbReference type="HOGENOM" id="CLU_166075_0_0_6"/>
<dbReference type="OrthoDB" id="9180733at2"/>
<dbReference type="PhylomeDB" id="P44748"/>
<dbReference type="BioCyc" id="HINF71421:G1GJ1-559-MONOMER"/>
<dbReference type="Proteomes" id="UP000000579">
    <property type="component" value="Chromosome"/>
</dbReference>
<dbReference type="GO" id="GO:1990077">
    <property type="term" value="C:primosome complex"/>
    <property type="evidence" value="ECO:0007669"/>
    <property type="project" value="UniProtKB-KW"/>
</dbReference>
<dbReference type="GO" id="GO:0003697">
    <property type="term" value="F:single-stranded DNA binding"/>
    <property type="evidence" value="ECO:0007669"/>
    <property type="project" value="UniProtKB-UniRule"/>
</dbReference>
<dbReference type="GO" id="GO:0006269">
    <property type="term" value="P:DNA replication, synthesis of primer"/>
    <property type="evidence" value="ECO:0007669"/>
    <property type="project" value="UniProtKB-KW"/>
</dbReference>
<dbReference type="Gene3D" id="2.40.50.140">
    <property type="entry name" value="Nucleic acid-binding proteins"/>
    <property type="match status" value="1"/>
</dbReference>
<dbReference type="HAMAP" id="MF_00720">
    <property type="entry name" value="PriB"/>
    <property type="match status" value="1"/>
</dbReference>
<dbReference type="InterPro" id="IPR012340">
    <property type="entry name" value="NA-bd_OB-fold"/>
</dbReference>
<dbReference type="InterPro" id="IPR000424">
    <property type="entry name" value="Primosome_PriB/ssb"/>
</dbReference>
<dbReference type="InterPro" id="IPR023646">
    <property type="entry name" value="Prisomal_replication_PriB"/>
</dbReference>
<dbReference type="NCBIfam" id="TIGR04418">
    <property type="entry name" value="PriB_gamma"/>
    <property type="match status" value="1"/>
</dbReference>
<dbReference type="Pfam" id="PF22657">
    <property type="entry name" value="SSB_1"/>
    <property type="match status" value="1"/>
</dbReference>
<dbReference type="PIRSF" id="PIRSF003135">
    <property type="entry name" value="Primosomal_n"/>
    <property type="match status" value="1"/>
</dbReference>
<dbReference type="SUPFAM" id="SSF50249">
    <property type="entry name" value="Nucleic acid-binding proteins"/>
    <property type="match status" value="1"/>
</dbReference>
<dbReference type="PROSITE" id="PS50935">
    <property type="entry name" value="SSB"/>
    <property type="match status" value="1"/>
</dbReference>
<reference key="1">
    <citation type="journal article" date="1995" name="Science">
        <title>Whole-genome random sequencing and assembly of Haemophilus influenzae Rd.</title>
        <authorList>
            <person name="Fleischmann R.D."/>
            <person name="Adams M.D."/>
            <person name="White O."/>
            <person name="Clayton R.A."/>
            <person name="Kirkness E.F."/>
            <person name="Kerlavage A.R."/>
            <person name="Bult C.J."/>
            <person name="Tomb J.-F."/>
            <person name="Dougherty B.A."/>
            <person name="Merrick J.M."/>
            <person name="McKenney K."/>
            <person name="Sutton G.G."/>
            <person name="FitzHugh W."/>
            <person name="Fields C.A."/>
            <person name="Gocayne J.D."/>
            <person name="Scott J.D."/>
            <person name="Shirley R."/>
            <person name="Liu L.-I."/>
            <person name="Glodek A."/>
            <person name="Kelley J.M."/>
            <person name="Weidman J.F."/>
            <person name="Phillips C.A."/>
            <person name="Spriggs T."/>
            <person name="Hedblom E."/>
            <person name="Cotton M.D."/>
            <person name="Utterback T.R."/>
            <person name="Hanna M.C."/>
            <person name="Nguyen D.T."/>
            <person name="Saudek D.M."/>
            <person name="Brandon R.C."/>
            <person name="Fine L.D."/>
            <person name="Fritchman J.L."/>
            <person name="Fuhrmann J.L."/>
            <person name="Geoghagen N.S.M."/>
            <person name="Gnehm C.L."/>
            <person name="McDonald L.A."/>
            <person name="Small K.V."/>
            <person name="Fraser C.M."/>
            <person name="Smith H.O."/>
            <person name="Venter J.C."/>
        </authorList>
    </citation>
    <scope>NUCLEOTIDE SEQUENCE [LARGE SCALE GENOMIC DNA]</scope>
    <source>
        <strain>ATCC 51907 / DSM 11121 / KW20 / Rd</strain>
    </source>
</reference>
<reference key="2">
    <citation type="submission" date="1996-09" db="EMBL/GenBank/DDBJ databases">
        <authorList>
            <person name="White O."/>
            <person name="Clayton R.A."/>
            <person name="Kerlavage A.R."/>
            <person name="Fleischmann R.D."/>
        </authorList>
    </citation>
    <scope>SEQUENCE REVISION</scope>
</reference>
<name>PRIB_HAEIN</name>
<feature type="chain" id="PRO_0000199053" description="Replication restart protein PriB">
    <location>
        <begin position="1"/>
        <end position="108"/>
    </location>
</feature>
<feature type="domain" description="SSB" evidence="1">
    <location>
        <begin position="8"/>
        <end position="108"/>
    </location>
</feature>
<protein>
    <recommendedName>
        <fullName evidence="1">Replication restart protein PriB</fullName>
    </recommendedName>
</protein>
<gene>
    <name evidence="1" type="primary">priB</name>
    <name type="ordered locus">HI_0546</name>
</gene>
<keyword id="KW-0235">DNA replication</keyword>
<keyword id="KW-0238">DNA-binding</keyword>
<keyword id="KW-0639">Primosome</keyword>
<keyword id="KW-1185">Reference proteome</keyword>
<proteinExistence type="inferred from homology"/>